<gene>
    <name type="primary">envZ</name>
    <name type="synonym">ompB</name>
    <name type="synonym">perA</name>
    <name type="synonym">tpo</name>
    <name type="ordered locus">b3404</name>
    <name type="ordered locus">JW3367</name>
</gene>
<dbReference type="EC" id="2.7.13.3" evidence="15"/>
<dbReference type="EMBL" id="J01656">
    <property type="protein sequence ID" value="AAA16242.1"/>
    <property type="molecule type" value="Unassigned_RNA"/>
</dbReference>
<dbReference type="EMBL" id="U18997">
    <property type="protein sequence ID" value="AAA58201.1"/>
    <property type="molecule type" value="Genomic_DNA"/>
</dbReference>
<dbReference type="EMBL" id="U00096">
    <property type="protein sequence ID" value="AAC76429.1"/>
    <property type="molecule type" value="Genomic_DNA"/>
</dbReference>
<dbReference type="EMBL" id="AP009048">
    <property type="protein sequence ID" value="BAE77887.1"/>
    <property type="molecule type" value="Genomic_DNA"/>
</dbReference>
<dbReference type="PIR" id="B25024">
    <property type="entry name" value="MMECZB"/>
</dbReference>
<dbReference type="RefSeq" id="NP_417863.1">
    <property type="nucleotide sequence ID" value="NC_000913.3"/>
</dbReference>
<dbReference type="RefSeq" id="WP_001253696.1">
    <property type="nucleotide sequence ID" value="NZ_STEB01000004.1"/>
</dbReference>
<dbReference type="PDB" id="1BXD">
    <property type="method" value="NMR"/>
    <property type="chains" value="A=290-450"/>
</dbReference>
<dbReference type="PDB" id="1JOY">
    <property type="method" value="NMR"/>
    <property type="chains" value="A/B=223-289"/>
</dbReference>
<dbReference type="PDB" id="3ZCC">
    <property type="method" value="X-ray"/>
    <property type="resolution" value="1.25 A"/>
    <property type="chains" value="A/B=229-288"/>
</dbReference>
<dbReference type="PDB" id="3ZRV">
    <property type="method" value="X-ray"/>
    <property type="resolution" value="1.65 A"/>
    <property type="chains" value="A/B=229-290"/>
</dbReference>
<dbReference type="PDB" id="3ZRW">
    <property type="method" value="X-ray"/>
    <property type="resolution" value="2.25 A"/>
    <property type="chains" value="A/C/D=229-289, B=231-289"/>
</dbReference>
<dbReference type="PDB" id="3ZRX">
    <property type="method" value="X-ray"/>
    <property type="resolution" value="1.25 A"/>
    <property type="chains" value="A/B=229-289"/>
</dbReference>
<dbReference type="PDB" id="4CTI">
    <property type="method" value="X-ray"/>
    <property type="resolution" value="2.85 A"/>
    <property type="chains" value="A/B/C/D=228-450"/>
</dbReference>
<dbReference type="PDB" id="4KP4">
    <property type="method" value="X-ray"/>
    <property type="resolution" value="3.00 A"/>
    <property type="chains" value="A/B=223-253, A/B=266-450"/>
</dbReference>
<dbReference type="PDB" id="5B1N">
    <property type="method" value="X-ray"/>
    <property type="resolution" value="1.33 A"/>
    <property type="chains" value="A=223-289"/>
</dbReference>
<dbReference type="PDB" id="5B1O">
    <property type="method" value="X-ray"/>
    <property type="resolution" value="2.30 A"/>
    <property type="chains" value="A/B=223-289"/>
</dbReference>
<dbReference type="PDB" id="5XGA">
    <property type="method" value="X-ray"/>
    <property type="resolution" value="1.95 A"/>
    <property type="chains" value="A=36-158"/>
</dbReference>
<dbReference type="PDBsum" id="1BXD"/>
<dbReference type="PDBsum" id="1JOY"/>
<dbReference type="PDBsum" id="3ZCC"/>
<dbReference type="PDBsum" id="3ZRV"/>
<dbReference type="PDBsum" id="3ZRW"/>
<dbReference type="PDBsum" id="3ZRX"/>
<dbReference type="PDBsum" id="4CTI"/>
<dbReference type="PDBsum" id="4KP4"/>
<dbReference type="PDBsum" id="5B1N"/>
<dbReference type="PDBsum" id="5B1O"/>
<dbReference type="PDBsum" id="5XGA"/>
<dbReference type="SMR" id="P0AEJ4"/>
<dbReference type="BioGRID" id="4261266">
    <property type="interactions" value="50"/>
</dbReference>
<dbReference type="DIP" id="DIP-48357N"/>
<dbReference type="FunCoup" id="P0AEJ4">
    <property type="interactions" value="250"/>
</dbReference>
<dbReference type="IntAct" id="P0AEJ4">
    <property type="interactions" value="5"/>
</dbReference>
<dbReference type="MINT" id="P0AEJ4"/>
<dbReference type="STRING" id="511145.b3404"/>
<dbReference type="DrugBank" id="DB04395">
    <property type="generic name" value="Phosphoaminophosphonic Acid-Adenylate Ester"/>
</dbReference>
<dbReference type="iPTMnet" id="P0AEJ4"/>
<dbReference type="jPOST" id="P0AEJ4"/>
<dbReference type="PaxDb" id="511145-b3404"/>
<dbReference type="EnsemblBacteria" id="AAC76429">
    <property type="protein sequence ID" value="AAC76429"/>
    <property type="gene ID" value="b3404"/>
</dbReference>
<dbReference type="GeneID" id="93778594"/>
<dbReference type="GeneID" id="947272"/>
<dbReference type="KEGG" id="ecj:JW3367"/>
<dbReference type="KEGG" id="eco:b3404"/>
<dbReference type="KEGG" id="ecoc:C3026_18470"/>
<dbReference type="PATRIC" id="fig|1411691.4.peg.3325"/>
<dbReference type="EchoBASE" id="EB0265"/>
<dbReference type="eggNOG" id="COG2205">
    <property type="taxonomic scope" value="Bacteria"/>
</dbReference>
<dbReference type="HOGENOM" id="CLU_000445_89_27_6"/>
<dbReference type="InParanoid" id="P0AEJ4"/>
<dbReference type="OMA" id="WIRPPQA"/>
<dbReference type="OrthoDB" id="9804645at2"/>
<dbReference type="PhylomeDB" id="P0AEJ4"/>
<dbReference type="BioCyc" id="EcoCyc:ENVZ-MONOMER"/>
<dbReference type="BioCyc" id="MetaCyc:ENVZ-MONOMER"/>
<dbReference type="BRENDA" id="2.7.13.3">
    <property type="organism ID" value="2026"/>
</dbReference>
<dbReference type="EvolutionaryTrace" id="P0AEJ4"/>
<dbReference type="PRO" id="PR:P0AEJ4"/>
<dbReference type="Proteomes" id="UP000000625">
    <property type="component" value="Chromosome"/>
</dbReference>
<dbReference type="GO" id="GO:0005829">
    <property type="term" value="C:cytosol"/>
    <property type="evidence" value="ECO:0000314"/>
    <property type="project" value="EcoCyc"/>
</dbReference>
<dbReference type="GO" id="GO:0030288">
    <property type="term" value="C:outer membrane-bounded periplasmic space"/>
    <property type="evidence" value="ECO:0000314"/>
    <property type="project" value="EcoCyc"/>
</dbReference>
<dbReference type="GO" id="GO:0005886">
    <property type="term" value="C:plasma membrane"/>
    <property type="evidence" value="ECO:0000314"/>
    <property type="project" value="EcoCyc"/>
</dbReference>
<dbReference type="GO" id="GO:0005524">
    <property type="term" value="F:ATP binding"/>
    <property type="evidence" value="ECO:0007669"/>
    <property type="project" value="UniProtKB-KW"/>
</dbReference>
<dbReference type="GO" id="GO:0042802">
    <property type="term" value="F:identical protein binding"/>
    <property type="evidence" value="ECO:0000353"/>
    <property type="project" value="IntAct"/>
</dbReference>
<dbReference type="GO" id="GO:0004721">
    <property type="term" value="F:phosphoprotein phosphatase activity"/>
    <property type="evidence" value="ECO:0000314"/>
    <property type="project" value="EcoCyc"/>
</dbReference>
<dbReference type="GO" id="GO:0000155">
    <property type="term" value="F:phosphorelay sensor kinase activity"/>
    <property type="evidence" value="ECO:0000314"/>
    <property type="project" value="EcoCyc"/>
</dbReference>
<dbReference type="GO" id="GO:0042803">
    <property type="term" value="F:protein homodimerization activity"/>
    <property type="evidence" value="ECO:0000314"/>
    <property type="project" value="EcoCyc"/>
</dbReference>
<dbReference type="GO" id="GO:0000160">
    <property type="term" value="P:phosphorelay signal transduction system"/>
    <property type="evidence" value="ECO:0000314"/>
    <property type="project" value="EcoliWiki"/>
</dbReference>
<dbReference type="GO" id="GO:0046777">
    <property type="term" value="P:protein autophosphorylation"/>
    <property type="evidence" value="ECO:0000315"/>
    <property type="project" value="CACAO"/>
</dbReference>
<dbReference type="GO" id="GO:0006970">
    <property type="term" value="P:response to osmotic stress"/>
    <property type="evidence" value="ECO:0000314"/>
    <property type="project" value="EcoCyc"/>
</dbReference>
<dbReference type="GO" id="GO:0007165">
    <property type="term" value="P:signal transduction"/>
    <property type="evidence" value="ECO:0000314"/>
    <property type="project" value="EcoCyc"/>
</dbReference>
<dbReference type="CDD" id="cd06225">
    <property type="entry name" value="HAMP"/>
    <property type="match status" value="1"/>
</dbReference>
<dbReference type="CDD" id="cd16950">
    <property type="entry name" value="HATPase_EnvZ-like"/>
    <property type="match status" value="1"/>
</dbReference>
<dbReference type="CDD" id="cd00082">
    <property type="entry name" value="HisKA"/>
    <property type="match status" value="1"/>
</dbReference>
<dbReference type="FunFam" id="1.10.287.130:FF:000006">
    <property type="entry name" value="Osmolarity two-component histidine kinase EnvZ"/>
    <property type="match status" value="1"/>
</dbReference>
<dbReference type="FunFam" id="3.30.565.10:FF:000018">
    <property type="entry name" value="Two-component sensor kinase EnvZ"/>
    <property type="match status" value="1"/>
</dbReference>
<dbReference type="Gene3D" id="1.10.287.130">
    <property type="match status" value="1"/>
</dbReference>
<dbReference type="Gene3D" id="3.30.565.10">
    <property type="entry name" value="Histidine kinase-like ATPase, C-terminal domain"/>
    <property type="match status" value="1"/>
</dbReference>
<dbReference type="InterPro" id="IPR050980">
    <property type="entry name" value="2C_sensor_his_kinase"/>
</dbReference>
<dbReference type="InterPro" id="IPR003660">
    <property type="entry name" value="HAMP_dom"/>
</dbReference>
<dbReference type="InterPro" id="IPR036890">
    <property type="entry name" value="HATPase_C_sf"/>
</dbReference>
<dbReference type="InterPro" id="IPR005467">
    <property type="entry name" value="His_kinase_dom"/>
</dbReference>
<dbReference type="InterPro" id="IPR003661">
    <property type="entry name" value="HisK_dim/P_dom"/>
</dbReference>
<dbReference type="InterPro" id="IPR036097">
    <property type="entry name" value="HisK_dim/P_sf"/>
</dbReference>
<dbReference type="InterPro" id="IPR004358">
    <property type="entry name" value="Sig_transdc_His_kin-like_C"/>
</dbReference>
<dbReference type="NCBIfam" id="NF007004">
    <property type="entry name" value="PRK09467.1"/>
    <property type="match status" value="1"/>
</dbReference>
<dbReference type="PANTHER" id="PTHR44936:SF5">
    <property type="entry name" value="SENSOR HISTIDINE KINASE ENVZ"/>
    <property type="match status" value="1"/>
</dbReference>
<dbReference type="PANTHER" id="PTHR44936">
    <property type="entry name" value="SENSOR PROTEIN CREC"/>
    <property type="match status" value="1"/>
</dbReference>
<dbReference type="Pfam" id="PF00672">
    <property type="entry name" value="HAMP"/>
    <property type="match status" value="1"/>
</dbReference>
<dbReference type="Pfam" id="PF02518">
    <property type="entry name" value="HATPase_c"/>
    <property type="match status" value="1"/>
</dbReference>
<dbReference type="Pfam" id="PF00512">
    <property type="entry name" value="HisKA"/>
    <property type="match status" value="1"/>
</dbReference>
<dbReference type="PRINTS" id="PR00344">
    <property type="entry name" value="BCTRLSENSOR"/>
</dbReference>
<dbReference type="SMART" id="SM00304">
    <property type="entry name" value="HAMP"/>
    <property type="match status" value="1"/>
</dbReference>
<dbReference type="SMART" id="SM00387">
    <property type="entry name" value="HATPase_c"/>
    <property type="match status" value="1"/>
</dbReference>
<dbReference type="SMART" id="SM00388">
    <property type="entry name" value="HisKA"/>
    <property type="match status" value="1"/>
</dbReference>
<dbReference type="SUPFAM" id="SSF55874">
    <property type="entry name" value="ATPase domain of HSP90 chaperone/DNA topoisomerase II/histidine kinase"/>
    <property type="match status" value="1"/>
</dbReference>
<dbReference type="SUPFAM" id="SSF47384">
    <property type="entry name" value="Homodimeric domain of signal transducing histidine kinase"/>
    <property type="match status" value="1"/>
</dbReference>
<dbReference type="PROSITE" id="PS50885">
    <property type="entry name" value="HAMP"/>
    <property type="match status" value="1"/>
</dbReference>
<dbReference type="PROSITE" id="PS50109">
    <property type="entry name" value="HIS_KIN"/>
    <property type="match status" value="1"/>
</dbReference>
<reference key="1">
    <citation type="journal article" date="1982" name="J. Biol. Chem.">
        <title>Osmoregulation of gene expression. II. DNA sequence of the envZ gene of the ompB operon of Escherichia coli and characterization of its gene product.</title>
        <authorList>
            <person name="Mizuno T."/>
            <person name="Wurtzel E.T."/>
            <person name="Inouye M."/>
        </authorList>
    </citation>
    <scope>NUCLEOTIDE SEQUENCE [GENOMIC DNA]</scope>
    <scope>OPERON STRUCTURE</scope>
</reference>
<reference key="2">
    <citation type="journal article" date="1985" name="J. Bacteriol.">
        <title>Primary characterization of the protein products of the Escherichia coli ompB locus: structure and regulation of synthesis of the OmpR and EnvZ proteins.</title>
        <authorList>
            <person name="Comeau D.E."/>
            <person name="Ikenaka K."/>
            <person name="Tsung K."/>
            <person name="Inouye M."/>
        </authorList>
    </citation>
    <scope>NUCLEOTIDE SEQUENCE [GENOMIC DNA]</scope>
    <scope>OPERON STRUCTURE</scope>
    <scope>SEQUENCE REVISION TO N-TERMINUS</scope>
    <source>
        <strain>K12</strain>
    </source>
</reference>
<reference key="3">
    <citation type="journal article" date="1997" name="Science">
        <title>The complete genome sequence of Escherichia coli K-12.</title>
        <authorList>
            <person name="Blattner F.R."/>
            <person name="Plunkett G. III"/>
            <person name="Bloch C.A."/>
            <person name="Perna N.T."/>
            <person name="Burland V."/>
            <person name="Riley M."/>
            <person name="Collado-Vides J."/>
            <person name="Glasner J.D."/>
            <person name="Rode C.K."/>
            <person name="Mayhew G.F."/>
            <person name="Gregor J."/>
            <person name="Davis N.W."/>
            <person name="Kirkpatrick H.A."/>
            <person name="Goeden M.A."/>
            <person name="Rose D.J."/>
            <person name="Mau B."/>
            <person name="Shao Y."/>
        </authorList>
    </citation>
    <scope>NUCLEOTIDE SEQUENCE [LARGE SCALE GENOMIC DNA]</scope>
    <source>
        <strain>K12 / MG1655 / ATCC 47076</strain>
    </source>
</reference>
<reference key="4">
    <citation type="journal article" date="2006" name="Mol. Syst. Biol.">
        <title>Highly accurate genome sequences of Escherichia coli K-12 strains MG1655 and W3110.</title>
        <authorList>
            <person name="Hayashi K."/>
            <person name="Morooka N."/>
            <person name="Yamamoto Y."/>
            <person name="Fujita K."/>
            <person name="Isono K."/>
            <person name="Choi S."/>
            <person name="Ohtsubo E."/>
            <person name="Baba T."/>
            <person name="Wanner B.L."/>
            <person name="Mori H."/>
            <person name="Horiuchi T."/>
        </authorList>
    </citation>
    <scope>NUCLEOTIDE SEQUENCE [LARGE SCALE GENOMIC DNA]</scope>
    <source>
        <strain>K12 / W3110 / ATCC 27325 / DSM 5911</strain>
    </source>
</reference>
<reference key="5">
    <citation type="journal article" date="1986" name="J. Bacteriol.">
        <title>Interaction between two regulatory proteins in osmoregulatory expression of ompF and ompC genes in Escherichia coli: a novel ompR mutation suppresses pleiotropic defects caused by an envZ mutation.</title>
        <authorList>
            <person name="Matsuyama S."/>
            <person name="Mizuno T."/>
            <person name="Mizushima S."/>
        </authorList>
    </citation>
    <scope>FUNCTION</scope>
    <scope>MUTAGENESIS OF THR-247</scope>
</reference>
<reference key="6">
    <citation type="journal article" date="1987" name="J. Biol. Chem.">
        <title>Localization and membrane topology of EnvZ, a protein involved in osmoregulation of OmpF and OmpC in Escherichia coli.</title>
        <authorList>
            <person name="Forst S."/>
            <person name="Comeau D."/>
            <person name="Norioka S."/>
            <person name="Inouye M."/>
        </authorList>
    </citation>
    <scope>SUBCELLULAR LOCATION</scope>
    <scope>TOPOLOGY</scope>
</reference>
<reference key="7">
    <citation type="journal article" date="1988" name="J. Bacteriol.">
        <title>EnvZ, a transmembrane environmental sensor of Escherichia coli K-12, is phosphorylated in vitro.</title>
        <authorList>
            <person name="Igo M.M."/>
            <person name="Silhavy T.J."/>
        </authorList>
    </citation>
    <scope>PHOSPHORYLATION</scope>
    <scope>DISRUPTION PHENOTYPE</scope>
    <scope>MUTAGENESIS OF 1-MET--ALA-38</scope>
</reference>
<reference key="8">
    <citation type="journal article" date="1989" name="J. Biol. Chem.">
        <title>Transfer of phosphoryl group between two regulatory proteins involved in osmoregulatory expression of the ompF and ompC genes in Escherichia coli.</title>
        <authorList>
            <person name="Aiba H."/>
            <person name="Mizuno T."/>
            <person name="Mizushima S."/>
        </authorList>
    </citation>
    <scope>FUNCTION IN PHOSPHORYLATING OMPR</scope>
    <scope>CATALYTIC ACTIVITY</scope>
    <scope>AUTOPHOSPHORYLATION</scope>
</reference>
<reference key="9">
    <citation type="journal article" date="1989" name="J. Biol. Chem.">
        <title>Evidence for the physiological importance of the phosphotransfer between the two regulatory components, EnvZ and OmpR, in osmoregulation in Escherichia coli.</title>
        <authorList>
            <person name="Aiba H."/>
            <person name="Nakasai F."/>
            <person name="Mizushima S."/>
            <person name="Mizuno T."/>
        </authorList>
    </citation>
    <scope>FUNCTION IN PHOSPHORYLATING AND DEPHOSPHORYLATING OMPR</scope>
    <scope>CATALYTIC ACTIVITY</scope>
    <scope>AUTOPHOSPHORYLATION</scope>
    <scope>MUTAGENESIS OF THR-247</scope>
</reference>
<reference key="10">
    <citation type="journal article" date="1989" name="Proc. Natl. Acad. Sci. U.S.A.">
        <title>Phosphorylation of OmpR by the osmosensor EnvZ modulates expression of the ompF and ompC genes in Escherichia coli.</title>
        <authorList>
            <person name="Forst S."/>
            <person name="Delgado J."/>
            <person name="Inouye M."/>
        </authorList>
    </citation>
    <scope>FUNCTION IN PHOSPHORYLATING OMPR</scope>
    <scope>CATALYTIC ACTIVITY</scope>
    <scope>AUTOPHOSPHORYLATION</scope>
    <scope>MUTAGENESIS OF HIS-243</scope>
</reference>
<reference key="11">
    <citation type="journal article" date="1989" name="J. Biochem.">
        <title>Phosphorylation of a bacterial activator protein, OmpR, by a protein kinase, EnvZ, results in stimulation of its DNA-binding ability.</title>
        <authorList>
            <person name="Aiba H."/>
            <person name="Nakasai F."/>
            <person name="Mizushima S."/>
            <person name="Mizuno T."/>
        </authorList>
    </citation>
    <scope>FUNCTION</scope>
    <scope>CATALYTIC ACTIVITY</scope>
    <scope>PHOSPHORYLATION</scope>
</reference>
<reference key="12">
    <citation type="journal article" date="1989" name="Genes Dev.">
        <title>Phosphorylation and dephosphorylation of a bacterial transcriptional activator by a transmembrane receptor.</title>
        <authorList>
            <person name="Igo M.M."/>
            <person name="Ninfa A.J."/>
            <person name="Stock J.B."/>
            <person name="Silhavy T.J."/>
        </authorList>
    </citation>
    <scope>FUNCTION IN PHOSPHORYLATING AND DEPHOSPHORYLATING OMPR</scope>
    <scope>CROSSTALK BETWEEN TWO-COMPONENT SYSTEMS</scope>
    <scope>MUTAGENESIS OF 1-MET--ALA-38</scope>
</reference>
<reference key="13">
    <citation type="journal article" date="1990" name="J. Biochem.">
        <title>Transmembrane signal transduction and osmoregulation in Escherichia coli: I. Analysis by site-directed mutagenesis of the amino acid residues involved in phosphotransfer between the two regulatory components, EnvZ and OmpR.</title>
        <authorList>
            <person name="Kanamaru K."/>
            <person name="Aiba H."/>
            <person name="Mizuno T."/>
        </authorList>
    </citation>
    <scope>FUNCTION IN PHOSPHORYLATING AND DEPHOSPHORYLATING OMPR</scope>
    <scope>AUTOPHOSPHORYLATION</scope>
    <scope>DISRUPTION PHENOTYPE</scope>
    <scope>MUTAGENESIS OF HIS-243</scope>
</reference>
<reference key="14">
    <citation type="journal article" date="1992" name="J. Biochem.">
        <title>Transmembrane signal transduction and osmoregulation in Escherichia coli: functional importance of the transmembrane regions of membrane-located protein kinase, EnvZ.</title>
        <authorList>
            <person name="Tokishita S."/>
            <person name="Kojima A."/>
            <person name="Mizuno T."/>
        </authorList>
    </citation>
    <scope>FUNCTION IN PHOSPHORYLATING AND DEPHOSPHORYLATING OMPR</scope>
    <scope>SUBCELLULAR LOCATION</scope>
    <scope>MUTAGENESIS OF LEU-18; PRO-41; ARG-180; PRO-185 AND THR-247</scope>
</reference>
<reference key="15">
    <citation type="journal article" date="1994" name="J. Biol. Chem.">
        <title>Identification of the site of phosphorylation on the osmosensor, EnvZ, of Escherichia coli.</title>
        <authorList>
            <person name="Roberts D.L."/>
            <person name="Bennett D.W."/>
            <person name="Forst S.A."/>
        </authorList>
    </citation>
    <scope>PHOSPHORYLATION AT HIS-243</scope>
</reference>
<reference key="16">
    <citation type="journal article" date="2005" name="Science">
        <title>Global topology analysis of the Escherichia coli inner membrane proteome.</title>
        <authorList>
            <person name="Daley D.O."/>
            <person name="Rapp M."/>
            <person name="Granseth E."/>
            <person name="Melen K."/>
            <person name="Drew D."/>
            <person name="von Heijne G."/>
        </authorList>
    </citation>
    <scope>SUBCELLULAR LOCATION</scope>
    <scope>TOPOLOGY [LARGE SCALE ANALYSIS]</scope>
    <source>
        <strain>K12 / MG1655 / ATCC 47076</strain>
    </source>
</reference>
<reference key="17">
    <citation type="journal article" date="2005" name="Biochem. J.">
        <title>Structural characterization of Escherichia coli sensor histidine kinase EnvZ: the periplasmic C-terminal core domain is critical for homodimerization.</title>
        <authorList>
            <person name="Khorchid A."/>
            <person name="Inouye M."/>
            <person name="Ikura M."/>
        </authorList>
    </citation>
    <scope>SUBUNIT</scope>
</reference>
<reference key="18">
    <citation type="journal article" date="2007" name="J. Biol. Chem.">
        <title>Structural and functional studies of the HAMP domain of EnvZ, an osmosensing transmembrane histidine kinase in Escherichia coli.</title>
        <authorList>
            <person name="Kishii R."/>
            <person name="Falzon L."/>
            <person name="Yoshida T."/>
            <person name="Kobayashi H."/>
            <person name="Inouye M."/>
        </authorList>
    </citation>
    <scope>DOMAIN</scope>
    <scope>MUTAGENESIS OF ALA-193</scope>
</reference>
<reference key="19">
    <citation type="journal article" date="2009" name="Mol. Microbiol.">
        <title>MzrA: a novel modulator of the EnvZ/OmpR two-component regulon.</title>
        <authorList>
            <person name="Gerken H."/>
            <person name="Charlson E.S."/>
            <person name="Cicirelli E.M."/>
            <person name="Kenney L.J."/>
            <person name="Misra R."/>
        </authorList>
    </citation>
    <scope>INTERACTION WITH MZRA</scope>
    <scope>ACTIVITY REGULATION</scope>
    <source>
        <strain>K12 / MC4100 / ATCC 35695 / DSM 6574</strain>
    </source>
</reference>
<reference key="20">
    <citation type="journal article" date="2010" name="J. Bacteriol.">
        <title>MzrA-EnvZ interactions in the periplasm influence the EnvZ/OmpR two-component regulon.</title>
        <authorList>
            <person name="Gerken H."/>
            <person name="Misra R."/>
        </authorList>
    </citation>
    <scope>INTERACTION WITH MZRA</scope>
    <scope>ACTIVITY REGULATION</scope>
    <source>
        <strain>K12 / MC4100 / ATCC 35695 / DSM 6574</strain>
    </source>
</reference>
<reference key="21">
    <citation type="journal article" date="2012" name="EMBO J.">
        <title>The inner membrane histidine kinase EnvZ senses osmolality via helix-coil transitions in the cytoplasm.</title>
        <authorList>
            <person name="Wang L.C."/>
            <person name="Morgan L.K."/>
            <person name="Godakumbura P."/>
            <person name="Kenney L.J."/>
            <person name="Anand G.S."/>
        </authorList>
    </citation>
    <scope>MECHANISM</scope>
    <scope>DOMAIN</scope>
    <scope>AUTOPHOSPHORYLATION</scope>
</reference>
<reference key="22">
    <citation type="journal article" date="2015" name="EMBO J.">
        <title>The inner membrane histidine kinase EnvZ senses osmolality via helix-coil transitions in the cytoplasm.</title>
        <authorList>
            <person name="Wang L.C."/>
            <person name="Morgan L.K."/>
            <person name="Godakumbura P."/>
            <person name="Kenney L.J."/>
            <person name="Anand G.S."/>
        </authorList>
    </citation>
    <scope>ERRATUM OF PUBMED:22543870</scope>
</reference>
<reference key="23">
    <citation type="journal article" date="2017" name="Biophys. J.">
        <title>Lipid-mediated regulation of embedded receptor kinases via parallel allosteric relays.</title>
        <authorList>
            <person name="Ghosh M."/>
            <person name="Wang L.C."/>
            <person name="Ramesh R."/>
            <person name="Morgan L.K."/>
            <person name="Kenney L.J."/>
            <person name="Anand G.S."/>
        </authorList>
    </citation>
    <scope>MECHANISM</scope>
    <scope>SUBUNIT</scope>
</reference>
<reference key="24">
    <citation type="journal article" date="2017" name="Nat. Commun.">
        <title>Non-canonical activation of OmpR drives acid and osmotic stress responses in single bacterial cells.</title>
        <authorList>
            <person name="Chakraborty S."/>
            <person name="Winardhi R.S."/>
            <person name="Morgan L.K."/>
            <person name="Yan J."/>
            <person name="Kenney L.J."/>
        </authorList>
    </citation>
    <scope>FUNCTION IN ACID STRESS</scope>
    <source>
        <strain>K12 / MG1655 / ATCC 47076</strain>
    </source>
</reference>
<reference key="25">
    <citation type="journal article" date="2018" name="PLoS ONE">
        <title>The role of polyproline motifs in the histidine kinase EnvZ.</title>
        <authorList>
            <person name="Motz M."/>
            <person name="Jung K."/>
        </authorList>
    </citation>
    <scope>INTERACTION WITH MZRA</scope>
    <scope>SUBUNIT</scope>
    <scope>MUTAGENESIS OF 73-PRO-PRO-74 AND 202-PRO--PRO-204</scope>
</reference>
<reference evidence="41" key="26">
    <citation type="journal article" date="1998" name="Nature">
        <title>NMR structure of the histidine kinase domain of the E. coli osmosensor EnvZ.</title>
        <authorList>
            <person name="Tanaka T."/>
            <person name="Saha S.K."/>
            <person name="Tomomori C."/>
            <person name="Ishima R."/>
            <person name="Liu D."/>
            <person name="Tong K.I."/>
            <person name="Park H."/>
            <person name="Dutta R."/>
            <person name="Qin L."/>
            <person name="Swindells M.B."/>
            <person name="Yamazaki T."/>
            <person name="Ono A.M."/>
            <person name="Kainosho M."/>
            <person name="Inouye M."/>
            <person name="Ikura M."/>
        </authorList>
    </citation>
    <scope>STRUCTURE BY NMR OF 290-450 IN COMPLEX WITH ATP ANALOG</scope>
    <scope>MUTAGENESIS OF ASN-347</scope>
    <scope>AUTOPHOSPHORYLATION</scope>
</reference>
<reference evidence="42" key="27">
    <citation type="journal article" date="1999" name="Nat. Struct. Biol.">
        <title>Solution structure of the homodimeric core domain of Escherichia coli histidine kinase EnvZ.</title>
        <authorList>
            <person name="Tomomori C."/>
            <person name="Tanaka T."/>
            <person name="Dutta R."/>
            <person name="Park H."/>
            <person name="Saha S.K."/>
            <person name="Zhu Y."/>
            <person name="Ishima R."/>
            <person name="Liu D."/>
            <person name="Tong K.I."/>
            <person name="Kurokawa H."/>
            <person name="Qian H."/>
            <person name="Inouye M."/>
            <person name="Ikura M."/>
        </authorList>
    </citation>
    <scope>STRUCTURE BY NMR OF 223-289</scope>
    <scope>SUBUNIT</scope>
</reference>
<reference key="28">
    <citation type="journal article" date="2003" name="J. Mol. Biol.">
        <title>Probing catalytically essential domain orientation in histidine kinase EnvZ by targeted disulfide crosslinking.</title>
        <authorList>
            <person name="Cai S./J."/>
            <person name="Khorchid A."/>
            <person name="Ikura M."/>
            <person name="Inouye M."/>
        </authorList>
    </citation>
    <scope>3D-STRUCTURE MODELING OF 223-450</scope>
    <scope>TOPOLOGY</scope>
</reference>
<reference evidence="46" key="29">
    <citation type="journal article" date="2017" name="FEBS Lett.">
        <title>Crystal structure of the EnvZ periplasmic domain with CHAPS.</title>
        <authorList>
            <person name="Hwang E."/>
            <person name="Cheong H.K."/>
            <person name="Kim S.Y."/>
            <person name="Kwon O."/>
            <person name="Blain K.Y."/>
            <person name="Choe S."/>
            <person name="Yeo K.J."/>
            <person name="Jung Y.W."/>
            <person name="Jeon Y.H."/>
            <person name="Cheong C."/>
        </authorList>
    </citation>
    <scope>X-RAY CRYSTALLOGRAPHY (1.95 ANGSTROMS) OF 36-158 IN THE PRESENCE OF DETERGENT</scope>
    <scope>ACTIVITY REGULATION</scope>
    <scope>DOMAIN</scope>
    <source>
        <strain>K12 / MC4100</strain>
    </source>
</reference>
<reference evidence="44 45" key="30">
    <citation type="journal article" date="2017" name="J. Antibiot.">
        <title>Angucycline antibiotic waldiomycin recognizes common structural motif conserved in bacterial histidine kinases.</title>
        <authorList>
            <person name="Eguchi Y."/>
            <person name="Okajima T."/>
            <person name="Tochio N."/>
            <person name="Inukai Y."/>
            <person name="Shimizu R."/>
            <person name="Ueda S."/>
            <person name="Shinya S."/>
            <person name="Kigawa T."/>
            <person name="Fukamizo T."/>
            <person name="Igarashi M."/>
            <person name="Utsumi R."/>
        </authorList>
    </citation>
    <scope>X-RAY CRYSTALLOGRAPHY (1.33 ANGSTROMS) OF 223-289</scope>
    <scope>X-RAY CRYSTALLOGRAPHY (2.30 ANGSTROMS) OF MUTATED 223-289</scope>
    <scope>ACTIVITY REGULATION</scope>
    <scope>SUBUNIT</scope>
    <scope>DOMAIN</scope>
    <scope>MUTAGENESIS OF ARG-234; SER-242; ASP-244; THR-247 AND PRO-248</scope>
</reference>
<feature type="chain" id="PRO_0000074759" description="Sensor histidine kinase EnvZ">
    <location>
        <begin position="1"/>
        <end position="450"/>
    </location>
</feature>
<feature type="topological domain" description="Cytoplasmic" evidence="38">
    <location>
        <begin position="1"/>
        <end position="15"/>
    </location>
</feature>
<feature type="transmembrane region" description="Helical" evidence="38">
    <location>
        <begin position="16"/>
        <end position="35"/>
    </location>
</feature>
<feature type="topological domain" description="Periplasmic" evidence="38">
    <location>
        <begin position="36"/>
        <end position="158"/>
    </location>
</feature>
<feature type="transmembrane region" description="Helical" evidence="38">
    <location>
        <begin position="159"/>
        <end position="179"/>
    </location>
</feature>
<feature type="topological domain" description="Cytoplasmic" evidence="32 33 38">
    <location>
        <begin position="180"/>
        <end position="450"/>
    </location>
</feature>
<feature type="domain" description="HAMP" evidence="1">
    <location>
        <begin position="180"/>
        <end position="232"/>
    </location>
</feature>
<feature type="domain" description="Histidine kinase" evidence="2">
    <location>
        <begin position="240"/>
        <end position="440"/>
    </location>
</feature>
<feature type="region of interest" description="Cytoplasmic dimerization domain (CDD), when dimerized forms osmosensitive core" evidence="7">
    <location>
        <begin position="223"/>
        <end position="289"/>
    </location>
</feature>
<feature type="short sequence motif" description="polyP-periplasmic motif" evidence="28">
    <location>
        <begin position="71"/>
        <end position="75"/>
    </location>
</feature>
<feature type="short sequence motif" description="polyP-cytoplasmic motif" evidence="28">
    <location>
        <begin position="201"/>
        <end position="205"/>
    </location>
</feature>
<feature type="binding site" evidence="43">
    <location>
        <position position="243"/>
    </location>
    <ligand>
        <name>ATP</name>
        <dbReference type="ChEBI" id="CHEBI:30616"/>
    </ligand>
</feature>
<feature type="binding site" evidence="43">
    <location>
        <begin position="347"/>
        <end position="351"/>
    </location>
    <ligand>
        <name>ATP</name>
        <dbReference type="ChEBI" id="CHEBI:30616"/>
    </ligand>
</feature>
<feature type="binding site" evidence="43">
    <location>
        <position position="373"/>
    </location>
    <ligand>
        <name>ATP</name>
        <dbReference type="ChEBI" id="CHEBI:30616"/>
    </ligand>
</feature>
<feature type="binding site" evidence="43">
    <location>
        <begin position="392"/>
        <end position="393"/>
    </location>
    <ligand>
        <name>ATP</name>
        <dbReference type="ChEBI" id="CHEBI:30616"/>
    </ligand>
</feature>
<feature type="binding site" evidence="43">
    <location>
        <begin position="402"/>
        <end position="406"/>
    </location>
    <ligand>
        <name>ATP</name>
        <dbReference type="ChEBI" id="CHEBI:30616"/>
    </ligand>
</feature>
<feature type="modified residue" description="Phosphohistidine; by autocatalysis" evidence="2 26">
    <location>
        <position position="243"/>
    </location>
</feature>
<feature type="mutagenesis site" description="In envZ115; low constitutive expression of OmpC or OmpF at low and high osmolarity. Phosphorylates and dephosphorylates OmpR." evidence="12 24">
    <original>MRRLRFSPRSSFARTLLLIVTLLFASLVTTYLVVLNFA</original>
    <variation>MTMITDSL</variation>
    <location>
        <begin position="1"/>
        <end position="38"/>
    </location>
</feature>
<feature type="mutagenesis site" description="No OmpC, constitutive OmpF, with or without sucrose. No change in phosphorylation or dephosphorylation of OmpR." evidence="4">
    <original>L</original>
    <variation>F</variation>
    <location>
        <position position="18"/>
    </location>
</feature>
<feature type="mutagenesis site" description="Constitutive OmpC, no OmpF, with or without sucrose. Phosphorylates but does not dephosphorylate OmpR." evidence="4">
    <original>P</original>
    <variation>L</variation>
    <variation>S</variation>
    <location>
        <position position="41"/>
    </location>
</feature>
<feature type="mutagenesis site" description="Decreased interaction with MzrA." evidence="22">
    <original>PP</original>
    <variation>AA</variation>
    <location>
        <begin position="73"/>
        <end position="74"/>
    </location>
</feature>
<feature type="mutagenesis site" description="No OmpC, constitutive OmpF, with or without sucrose. Weakly phosphorylates OmpR, dephosphorylates normally." evidence="4">
    <original>R</original>
    <variation>C</variation>
    <location>
        <position position="180"/>
    </location>
</feature>
<feature type="mutagenesis site" description="Constitutive OmpC, no OmpF, with or without sucrose. Weakly phosphorylates but does not dephosphorylate OmpR." evidence="4">
    <original>P</original>
    <variation>L</variation>
    <location>
        <position position="185"/>
    </location>
</feature>
<feature type="mutagenesis site" description="Promotes the formation of alpha-helical secondary structure of the HAMP domain." evidence="7">
    <original>A</original>
    <variation>L</variation>
    <location>
        <position position="193"/>
    </location>
</feature>
<feature type="mutagenesis site" description="No effect." evidence="7">
    <original>A</original>
    <variation>V</variation>
    <location>
        <position position="193"/>
    </location>
</feature>
<feature type="mutagenesis site" description="Decreased protein homodimerization, constitutive OmpC, little to no OmpF with or without salt, no interaction with MzrA." evidence="22">
    <original>PPP</original>
    <variation>AAA</variation>
    <location>
        <begin position="202"/>
        <end position="204"/>
    </location>
</feature>
<feature type="mutagenesis site" description="Autophosphorylation by cytoplasmic dimerization domain (CDD) is resistant to waldiomycin." evidence="17">
    <original>R</original>
    <variation>A</variation>
    <location>
        <position position="234"/>
    </location>
</feature>
<feature type="mutagenesis site" description="Autophosphorylation by CDD is resistant to waldiomycin, CDD peptide probably no longer binds waldiomycin." evidence="17">
    <original>S</original>
    <variation>A</variation>
    <location>
        <position position="242"/>
    </location>
</feature>
<feature type="mutagenesis site" description="Does not autophosphorylate, does not dephosphorylate OmpR in vitro, no OmpC or OmpF at 0% sucrose, low levels of OmpC and very low levels of OmpF at 15% sucrose." evidence="11">
    <original>H</original>
    <variation>R</variation>
    <location>
        <position position="243"/>
    </location>
</feature>
<feature type="mutagenesis site" description="Does not autophosphorylate, does not transfer phosphate to OmpR, increased expression of ompC, decreased expression of OmpF." evidence="15">
    <original>H</original>
    <variation>V</variation>
    <location>
        <position position="243"/>
    </location>
</feature>
<feature type="mutagenesis site" description="Autophosphorylation by CDD is resistant to waldiomycin, CDD peptide probably no longer binds waldiomycin." evidence="17">
    <original>D</original>
    <variation>A</variation>
    <location>
        <position position="244"/>
    </location>
</feature>
<feature type="mutagenesis site" description="Autophosphorylation by CDD is somewhat resistant to waldiomycin." evidence="17">
    <original>T</original>
    <variation>A</variation>
    <location>
        <position position="247"/>
    </location>
</feature>
<feature type="mutagenesis site" description="In envZ11/MH1461; OmpF- OmpC constitutive. Also prevents expression of PhoA and LamB. Phosphorylates OmpR but does not dephosphorylate it." evidence="4 14 25">
    <original>T</original>
    <variation>R</variation>
    <location>
        <position position="247"/>
    </location>
</feature>
<feature type="mutagenesis site" description="Autophosphorylation by CDD is resistant to waldiomycin, CDD peptide probably no longer binds waldiomycin, alters structure." evidence="17">
    <original>P</original>
    <variation>A</variation>
    <location>
        <position position="248"/>
    </location>
</feature>
<feature type="mutagenesis site" description="Loss of ATP binding; loss of autophosphorylation." evidence="27">
    <original>N</original>
    <variation>D</variation>
    <location>
        <position position="347"/>
    </location>
</feature>
<feature type="helix" evidence="51">
    <location>
        <begin position="43"/>
        <end position="57"/>
    </location>
</feature>
<feature type="strand" evidence="51">
    <location>
        <begin position="60"/>
        <end position="63"/>
    </location>
</feature>
<feature type="strand" evidence="51">
    <location>
        <begin position="69"/>
        <end position="71"/>
    </location>
</feature>
<feature type="helix" evidence="51">
    <location>
        <begin position="74"/>
        <end position="84"/>
    </location>
</feature>
<feature type="strand" evidence="51">
    <location>
        <begin position="87"/>
        <end position="90"/>
    </location>
</feature>
<feature type="helix" evidence="51">
    <location>
        <begin position="91"/>
        <end position="97"/>
    </location>
</feature>
<feature type="helix" evidence="51">
    <location>
        <begin position="99"/>
        <end position="101"/>
    </location>
</feature>
<feature type="helix" evidence="51">
    <location>
        <begin position="106"/>
        <end position="116"/>
    </location>
</feature>
<feature type="strand" evidence="51">
    <location>
        <begin position="120"/>
        <end position="125"/>
    </location>
</feature>
<feature type="strand" evidence="51">
    <location>
        <begin position="132"/>
        <end position="137"/>
    </location>
</feature>
<feature type="strand" evidence="51">
    <location>
        <begin position="143"/>
        <end position="148"/>
    </location>
</feature>
<feature type="helix" evidence="48">
    <location>
        <begin position="229"/>
        <end position="257"/>
    </location>
</feature>
<feature type="helix" evidence="48">
    <location>
        <begin position="261"/>
        <end position="263"/>
    </location>
</feature>
<feature type="helix" evidence="48">
    <location>
        <begin position="264"/>
        <end position="287"/>
    </location>
</feature>
<feature type="turn" evidence="49">
    <location>
        <begin position="290"/>
        <end position="292"/>
    </location>
</feature>
<feature type="strand" evidence="49">
    <location>
        <begin position="297"/>
        <end position="299"/>
    </location>
</feature>
<feature type="helix" evidence="49">
    <location>
        <begin position="301"/>
        <end position="309"/>
    </location>
</feature>
<feature type="strand" evidence="47">
    <location>
        <begin position="314"/>
        <end position="316"/>
    </location>
</feature>
<feature type="strand" evidence="49">
    <location>
        <begin position="319"/>
        <end position="322"/>
    </location>
</feature>
<feature type="strand" evidence="50">
    <location>
        <begin position="329"/>
        <end position="332"/>
    </location>
</feature>
<feature type="helix" evidence="49">
    <location>
        <begin position="334"/>
        <end position="350"/>
    </location>
</feature>
<feature type="strand" evidence="50">
    <location>
        <begin position="352"/>
        <end position="354"/>
    </location>
</feature>
<feature type="strand" evidence="49">
    <location>
        <begin position="356"/>
        <end position="359"/>
    </location>
</feature>
<feature type="strand" evidence="49">
    <location>
        <begin position="369"/>
        <end position="373"/>
    </location>
</feature>
<feature type="strand" evidence="49">
    <location>
        <begin position="378"/>
        <end position="380"/>
    </location>
</feature>
<feature type="helix" evidence="50">
    <location>
        <begin position="383"/>
        <end position="386"/>
    </location>
</feature>
<feature type="helix" evidence="50">
    <location>
        <begin position="394"/>
        <end position="397"/>
    </location>
</feature>
<feature type="helix" evidence="49">
    <location>
        <begin position="402"/>
        <end position="415"/>
    </location>
</feature>
<feature type="strand" evidence="49">
    <location>
        <begin position="419"/>
        <end position="422"/>
    </location>
</feature>
<feature type="turn" evidence="47">
    <location>
        <begin position="426"/>
        <end position="428"/>
    </location>
</feature>
<feature type="strand" evidence="49">
    <location>
        <begin position="431"/>
        <end position="435"/>
    </location>
</feature>
<evidence type="ECO:0000255" key="1">
    <source>
        <dbReference type="PROSITE-ProRule" id="PRU00102"/>
    </source>
</evidence>
<evidence type="ECO:0000255" key="2">
    <source>
        <dbReference type="PROSITE-ProRule" id="PRU00107"/>
    </source>
</evidence>
<evidence type="ECO:0000269" key="3">
    <source>
    </source>
</evidence>
<evidence type="ECO:0000269" key="4">
    <source>
    </source>
</evidence>
<evidence type="ECO:0000269" key="5">
    <source>
    </source>
</evidence>
<evidence type="ECO:0000269" key="6">
    <source>
    </source>
</evidence>
<evidence type="ECO:0000269" key="7">
    <source>
    </source>
</evidence>
<evidence type="ECO:0000269" key="8">
    <source>
    </source>
</evidence>
<evidence type="ECO:0000269" key="9">
    <source>
    </source>
</evidence>
<evidence type="ECO:0000269" key="10">
    <source>
    </source>
</evidence>
<evidence type="ECO:0000269" key="11">
    <source>
    </source>
</evidence>
<evidence type="ECO:0000269" key="12">
    <source>
    </source>
</evidence>
<evidence type="ECO:0000269" key="13">
    <source>
    </source>
</evidence>
<evidence type="ECO:0000269" key="14">
    <source>
    </source>
</evidence>
<evidence type="ECO:0000269" key="15">
    <source>
    </source>
</evidence>
<evidence type="ECO:0000269" key="16">
    <source>
    </source>
</evidence>
<evidence type="ECO:0000269" key="17">
    <source>
    </source>
</evidence>
<evidence type="ECO:0000269" key="18">
    <source>
    </source>
</evidence>
<evidence type="ECO:0000269" key="19">
    <source>
    </source>
</evidence>
<evidence type="ECO:0000269" key="20">
    <source>
    </source>
</evidence>
<evidence type="ECO:0000269" key="21">
    <source>
    </source>
</evidence>
<evidence type="ECO:0000269" key="22">
    <source>
    </source>
</evidence>
<evidence type="ECO:0000269" key="23">
    <source>
    </source>
</evidence>
<evidence type="ECO:0000269" key="24">
    <source>
    </source>
</evidence>
<evidence type="ECO:0000269" key="25">
    <source>
    </source>
</evidence>
<evidence type="ECO:0000269" key="26">
    <source>
    </source>
</evidence>
<evidence type="ECO:0000269" key="27">
    <source>
    </source>
</evidence>
<evidence type="ECO:0000303" key="28">
    <source>
    </source>
</evidence>
<evidence type="ECO:0000303" key="29">
    <source>
    </source>
</evidence>
<evidence type="ECO:0000305" key="30"/>
<evidence type="ECO:0000305" key="31">
    <source>
    </source>
</evidence>
<evidence type="ECO:0000305" key="32">
    <source>
    </source>
</evidence>
<evidence type="ECO:0000305" key="33">
    <source>
    </source>
</evidence>
<evidence type="ECO:0000305" key="34">
    <source>
    </source>
</evidence>
<evidence type="ECO:0000305" key="35">
    <source>
    </source>
</evidence>
<evidence type="ECO:0000305" key="36">
    <source>
    </source>
</evidence>
<evidence type="ECO:0000305" key="37">
    <source>
    </source>
</evidence>
<evidence type="ECO:0000305" key="38">
    <source>
    </source>
</evidence>
<evidence type="ECO:0000305" key="39">
    <source>
    </source>
</evidence>
<evidence type="ECO:0000305" key="40">
    <source>
    </source>
</evidence>
<evidence type="ECO:0007744" key="41">
    <source>
        <dbReference type="PDB" id="1BXD"/>
    </source>
</evidence>
<evidence type="ECO:0007744" key="42">
    <source>
        <dbReference type="PDB" id="1JOY"/>
    </source>
</evidence>
<evidence type="ECO:0007744" key="43">
    <source>
        <dbReference type="PDB" id="4KP4"/>
    </source>
</evidence>
<evidence type="ECO:0007744" key="44">
    <source>
        <dbReference type="PDB" id="5B1N"/>
    </source>
</evidence>
<evidence type="ECO:0007744" key="45">
    <source>
        <dbReference type="PDB" id="5B1O"/>
    </source>
</evidence>
<evidence type="ECO:0007744" key="46">
    <source>
        <dbReference type="PDB" id="5XGA"/>
    </source>
</evidence>
<evidence type="ECO:0007829" key="47">
    <source>
        <dbReference type="PDB" id="1BXD"/>
    </source>
</evidence>
<evidence type="ECO:0007829" key="48">
    <source>
        <dbReference type="PDB" id="3ZCC"/>
    </source>
</evidence>
<evidence type="ECO:0007829" key="49">
    <source>
        <dbReference type="PDB" id="4CTI"/>
    </source>
</evidence>
<evidence type="ECO:0007829" key="50">
    <source>
        <dbReference type="PDB" id="4KP4"/>
    </source>
</evidence>
<evidence type="ECO:0007829" key="51">
    <source>
        <dbReference type="PDB" id="5XGA"/>
    </source>
</evidence>
<organism>
    <name type="scientific">Escherichia coli (strain K12)</name>
    <dbReference type="NCBI Taxonomy" id="83333"/>
    <lineage>
        <taxon>Bacteria</taxon>
        <taxon>Pseudomonadati</taxon>
        <taxon>Pseudomonadota</taxon>
        <taxon>Gammaproteobacteria</taxon>
        <taxon>Enterobacterales</taxon>
        <taxon>Enterobacteriaceae</taxon>
        <taxon>Escherichia</taxon>
    </lineage>
</organism>
<sequence>MRRLRFSPRSSFARTLLLIVTLLFASLVTTYLVVLNFAILPSLQQFNKVLAYEVRMLMTDKLQLEDGTQLVVPPAFRREIYRELGISLYSNEAAEEAGLRWAQHYEFLSHQMAQQLGGPTEVRVEVNKSSPVVWLKTWLSPNIWVRVPLTEIHQGDFSPLFRYTLAIMLLAIGGAWLFIRIQNRPLVDLEHAALQVGKGIIPPPLREYGASEVRSVTRAFNHMAAGVKQLADDRTLLMAGVSHDLRTPLTRIRLATEMMSEQDGYLAESINKDIEECNAIIEQFIDYLRTGQEMPMEMADLNAVLGEVIAAESGYEREIETALYPGSIEVKMHPLSIKRAVANMVVNAARYGNGWIKVSSGTEPNRAWFQVEDDGPGIAPEQRKHLFQPFVRGDSARTISGTGLGLAIVQRIVDNHNGMLELGTSERGGLSIRAWLPVPVTRAQGTTKEG</sequence>
<protein>
    <recommendedName>
        <fullName evidence="30">Sensor histidine kinase EnvZ</fullName>
        <ecNumber evidence="15">2.7.13.3</ecNumber>
    </recommendedName>
    <alternativeName>
        <fullName evidence="30">Osmolarity sensor protein EnvZ</fullName>
    </alternativeName>
</protein>
<name>ENVZ_ECOLI</name>
<accession>P0AEJ4</accession>
<accession>P02933</accession>
<accession>Q2M769</accession>
<proteinExistence type="evidence at protein level"/>
<comment type="function">
    <text evidence="4 10 11 12 13 14 15 16 19 21 23 25">Member of the two-component regulatory system EnvZ/OmpR involved in osmoregulation (particularly of genes ompF and ompC) as well as other genes (PubMed:2997120, PubMed:3536870). EnvZ functions as a membrane-associated protein kinase that phosphorylates OmpR in response to environmental signals; at low osmolarity OmpR activates ompF transcription, while at high osmolarity it represses ompF and activates ompC transcription (PubMed:1323560, PubMed:2277041, PubMed:2558046, PubMed:2656684, PubMed:2668281, PubMed:2668953, PubMed:2674113). Also dephosphorylates OmpR in the presence of ATP (PubMed:1323560, PubMed:2277041, PubMed:2558046, PubMed:2668281). The cytoplasmic dimerization domain (CDD) forms an osmosensitive core; increasing osmolarity stabilizes this segment (possibly by its contraction), enhancing the autophosphorylation rate and consequently, downstream phosphotransfer to OmpR and signaling (PubMed:22543870, PubMed:28256224). Autophosphorylation is greater when full-length EnvZ is reconstituted in a lipid environment, lipid-mediated allostery impacts the kinase function of EnvZ (PubMed:28256224). Involved in acid stress response; this requires EnvZ but not OmpR phosphorylation, and suggests that EnvZ senses cytoplasmic acidic pH (PubMed:29138484).</text>
</comment>
<comment type="catalytic activity">
    <reaction evidence="15 35 36 37">
        <text>ATP + protein L-histidine = ADP + protein N-phospho-L-histidine.</text>
        <dbReference type="EC" id="2.7.13.3"/>
    </reaction>
</comment>
<comment type="activity regulation">
    <text evidence="8 9 17 20">Activity is modulated by MzrA (PubMed:19432797, PubMed:20889743). In the presence of 0.2 M NaCl, 2.0 mM sodium cholate (bile salts) decreases expression from the ompC promoter; how this is mediated is unknown (PubMed:28423182). Autophosphorylation is inhibited by the angucycline antibiotic waldiomycin in a non-competitive manner; waldiomycin prevents dimerization of the cytoplasmic domain and autophosphorylation (PubMed:27999439).</text>
</comment>
<comment type="subunit">
    <text evidence="3 5 8 9 17 19 22 27">Homodimer (PubMed:10426948, PubMed:15357641, PubMed:27999439, PubMed:28256224, PubMed:29953503, PubMed:9817206). Interacts with MzrA (PubMed:19432797, PubMed:20889743, PubMed:29953503).</text>
</comment>
<comment type="interaction">
    <interactant intactId="EBI-1121750">
        <id>P0AEJ4</id>
    </interactant>
    <interactant intactId="EBI-1121750">
        <id>P0AEJ4</id>
        <label>envZ</label>
    </interactant>
    <organismsDiffer>false</organismsDiffer>
    <experiments>2</experiments>
</comment>
<comment type="interaction">
    <interactant intactId="EBI-1121750">
        <id>P0AEJ4</id>
    </interactant>
    <interactant intactId="EBI-6412632">
        <id>P42615</id>
        <label>mzrA</label>
    </interactant>
    <organismsDiffer>false</organismsDiffer>
    <experiments>3</experiments>
</comment>
<comment type="interaction">
    <interactant intactId="EBI-1121750">
        <id>P0AEJ4</id>
    </interactant>
    <interactant intactId="EBI-369514">
        <id>P0AA16</id>
        <label>ompR</label>
    </interactant>
    <organismsDiffer>false</organismsDiffer>
    <experiments>2</experiments>
</comment>
<comment type="subcellular location">
    <subcellularLocation>
        <location evidence="4 6 18">Cell inner membrane</location>
        <topology evidence="31 32 38">Multi-pass membrane protein</topology>
    </subcellularLocation>
</comment>
<comment type="induction">
    <text evidence="39 40">Part of the ompR-envZ operon.</text>
</comment>
<comment type="domain">
    <text evidence="7 9 17 19 20 34">The periplasmic domain interacts with MzrA (Probable) (PubMed:20889743). The periplasmic domain assumes a PDC sensor fold (PubMed:28423182). The HAMP domain by itself is intrinsically disordered (PubMed:17635923). The cytoplasmic dimerization domain (CDD, residues 223-289) forms an osmosensitive core; increasing osmolarity stabilizes this segment, enhancing its autophosphorylation rate and consequently, downstream phosphotransfer to OmpR and signaling (PubMed:17635923, PubMed:28256224). The autophosphorylation activity of the CDD is inhibited by the angucycline antibiotic waldiomycin which probably binds to it (PubMed:27999439). The soluble EnvZ C-terminal fragment (residues 180-450) is capable of conferring osmolarity-sensitive expression of OmpC in the absence of the membrane anchor (PubMed:17635923).</text>
</comment>
<comment type="PTM">
    <text evidence="7 11 13 14 15 26 29">Autophosphorylated (PubMed:2277041, PubMed:2656684, PubMed:2668281, PubMed:2668953, PubMed:3056929, PubMed:8132603). Incubation of isolated EnvZ C-terminal fragment (residues 180-450) with increasing levels of NaCl or sucrose increases its autophosphorylation (PubMed:17635923).</text>
</comment>
<comment type="disruption phenotype">
    <text evidence="11 24">No expression of OmpC or OmpF during growth at 0% sucrose, low expression of OmpF at 15% sucrose (PubMed:3056929). Single deletion of envZ has no OmpC or OmpF at 0% sucrose, low levels of OmpC and very low levels of OmpF at 15% sucrose. Deletion of both ompR and envZ leads to loss of both OmpC and OmpF expression at 0% and 15% sucrose (PubMed:2277041).</text>
</comment>
<comment type="miscellaneous">
    <text evidence="12">Cross talk between this and the Che and Ntr two-component systems can occur at least in vitro.</text>
</comment>
<comment type="miscellaneous">
    <text evidence="22">Two or more proline residues often cause ribosome stalling and decreased protein translation; the cytoplasmic strong stop motif IPPPL does not have this effect and instead is involved in homodimerization, while the weaker periplasmic stop motif VVPPA motif is involved in MzrA interaction.</text>
</comment>
<keyword id="KW-0002">3D-structure</keyword>
<keyword id="KW-0067">ATP-binding</keyword>
<keyword id="KW-0997">Cell inner membrane</keyword>
<keyword id="KW-1003">Cell membrane</keyword>
<keyword id="KW-0418">Kinase</keyword>
<keyword id="KW-0472">Membrane</keyword>
<keyword id="KW-0547">Nucleotide-binding</keyword>
<keyword id="KW-0597">Phosphoprotein</keyword>
<keyword id="KW-1185">Reference proteome</keyword>
<keyword id="KW-0346">Stress response</keyword>
<keyword id="KW-0808">Transferase</keyword>
<keyword id="KW-0812">Transmembrane</keyword>
<keyword id="KW-1133">Transmembrane helix</keyword>
<keyword id="KW-0902">Two-component regulatory system</keyword>